<protein>
    <recommendedName>
        <fullName evidence="1">Holliday junction branch migration complex subunit RuvA</fullName>
    </recommendedName>
</protein>
<comment type="function">
    <text evidence="1">The RuvA-RuvB-RuvC complex processes Holliday junction (HJ) DNA during genetic recombination and DNA repair, while the RuvA-RuvB complex plays an important role in the rescue of blocked DNA replication forks via replication fork reversal (RFR). RuvA specifically binds to HJ cruciform DNA, conferring on it an open structure. The RuvB hexamer acts as an ATP-dependent pump, pulling dsDNA into and through the RuvAB complex. HJ branch migration allows RuvC to scan DNA until it finds its consensus sequence, where it cleaves and resolves the cruciform DNA.</text>
</comment>
<comment type="subunit">
    <text evidence="1">Homotetramer. Forms an RuvA(8)-RuvB(12)-Holliday junction (HJ) complex. HJ DNA is sandwiched between 2 RuvA tetramers; dsDNA enters through RuvA and exits via RuvB. An RuvB hexamer assembles on each DNA strand where it exits the tetramer. Each RuvB hexamer is contacted by two RuvA subunits (via domain III) on 2 adjacent RuvB subunits; this complex drives branch migration. In the full resolvosome a probable DNA-RuvA(4)-RuvB(12)-RuvC(2) complex forms which resolves the HJ.</text>
</comment>
<comment type="subcellular location">
    <subcellularLocation>
        <location evidence="1">Cytoplasm</location>
    </subcellularLocation>
</comment>
<comment type="domain">
    <text evidence="1">Has three domains with a flexible linker between the domains II and III and assumes an 'L' shape. Domain III is highly mobile and contacts RuvB.</text>
</comment>
<comment type="similarity">
    <text evidence="1">Belongs to the RuvA family.</text>
</comment>
<evidence type="ECO:0000255" key="1">
    <source>
        <dbReference type="HAMAP-Rule" id="MF_00031"/>
    </source>
</evidence>
<evidence type="ECO:0000256" key="2">
    <source>
        <dbReference type="SAM" id="MobiDB-lite"/>
    </source>
</evidence>
<gene>
    <name evidence="1" type="primary">ruvA</name>
    <name type="ordered locus">RHOS4_21600</name>
    <name type="ordered locus">RSP_0555</name>
</gene>
<reference key="1">
    <citation type="submission" date="2005-09" db="EMBL/GenBank/DDBJ databases">
        <title>Complete sequence of chromosome 1 of Rhodobacter sphaeroides 2.4.1.</title>
        <authorList>
            <person name="Copeland A."/>
            <person name="Lucas S."/>
            <person name="Lapidus A."/>
            <person name="Barry K."/>
            <person name="Detter J.C."/>
            <person name="Glavina T."/>
            <person name="Hammon N."/>
            <person name="Israni S."/>
            <person name="Pitluck S."/>
            <person name="Richardson P."/>
            <person name="Mackenzie C."/>
            <person name="Choudhary M."/>
            <person name="Larimer F."/>
            <person name="Hauser L.J."/>
            <person name="Land M."/>
            <person name="Donohue T.J."/>
            <person name="Kaplan S."/>
        </authorList>
    </citation>
    <scope>NUCLEOTIDE SEQUENCE [LARGE SCALE GENOMIC DNA]</scope>
    <source>
        <strain>ATCC 17023 / DSM 158 / JCM 6121 / CCUG 31486 / LMG 2827 / NBRC 12203 / NCIMB 8253 / ATH 2.4.1.</strain>
    </source>
</reference>
<name>RUVA_CERS4</name>
<sequence length="224" mass="23048">MIGKVAGILDFRGPDHVLIDVRGVGYIVYVSDRTLASMPGLGEGVALYTELVVREDLLQLFGFPTMIEKEWHRLLMTVQGVGAKAGMAILGALGAEGTARAITLGDARSIQAAPGIGPKIAQRVVLELKSKAPALMAMGGGTAALAPSEPPEPEPGTSSGSRRKTRAPEPPRPSHTADALSALANLGYQPTDAAQAVAQAAGESPDADTAALIRAALKLLAPKS</sequence>
<feature type="chain" id="PRO_0000224900" description="Holliday junction branch migration complex subunit RuvA">
    <location>
        <begin position="1"/>
        <end position="224"/>
    </location>
</feature>
<feature type="region of interest" description="Domain I" evidence="1">
    <location>
        <begin position="1"/>
        <end position="64"/>
    </location>
</feature>
<feature type="region of interest" description="Domain II" evidence="1">
    <location>
        <begin position="65"/>
        <end position="143"/>
    </location>
</feature>
<feature type="region of interest" description="Disordered" evidence="2">
    <location>
        <begin position="141"/>
        <end position="185"/>
    </location>
</feature>
<feature type="region of interest" description="Flexible linker" evidence="1">
    <location>
        <begin position="144"/>
        <end position="170"/>
    </location>
</feature>
<feature type="region of interest" description="Domain III" evidence="1">
    <location>
        <begin position="171"/>
        <end position="224"/>
    </location>
</feature>
<proteinExistence type="inferred from homology"/>
<dbReference type="EMBL" id="CP000143">
    <property type="protein sequence ID" value="ABA79728.1"/>
    <property type="molecule type" value="Genomic_DNA"/>
</dbReference>
<dbReference type="RefSeq" id="WP_011338315.1">
    <property type="nucleotide sequence ID" value="NZ_CP030271.1"/>
</dbReference>
<dbReference type="RefSeq" id="YP_353629.1">
    <property type="nucleotide sequence ID" value="NC_007493.2"/>
</dbReference>
<dbReference type="SMR" id="Q3J0F6"/>
<dbReference type="STRING" id="272943.RSP_0555"/>
<dbReference type="EnsemblBacteria" id="ABA79728">
    <property type="protein sequence ID" value="ABA79728"/>
    <property type="gene ID" value="RSP_0555"/>
</dbReference>
<dbReference type="GeneID" id="3717948"/>
<dbReference type="KEGG" id="rsp:RSP_0555"/>
<dbReference type="PATRIC" id="fig|272943.9.peg.2506"/>
<dbReference type="eggNOG" id="COG0632">
    <property type="taxonomic scope" value="Bacteria"/>
</dbReference>
<dbReference type="OrthoDB" id="5293449at2"/>
<dbReference type="PhylomeDB" id="Q3J0F6"/>
<dbReference type="Proteomes" id="UP000002703">
    <property type="component" value="Chromosome 1"/>
</dbReference>
<dbReference type="GO" id="GO:0005737">
    <property type="term" value="C:cytoplasm"/>
    <property type="evidence" value="ECO:0007669"/>
    <property type="project" value="UniProtKB-SubCell"/>
</dbReference>
<dbReference type="GO" id="GO:0009379">
    <property type="term" value="C:Holliday junction helicase complex"/>
    <property type="evidence" value="ECO:0007669"/>
    <property type="project" value="InterPro"/>
</dbReference>
<dbReference type="GO" id="GO:0048476">
    <property type="term" value="C:Holliday junction resolvase complex"/>
    <property type="evidence" value="ECO:0007669"/>
    <property type="project" value="UniProtKB-UniRule"/>
</dbReference>
<dbReference type="GO" id="GO:0005524">
    <property type="term" value="F:ATP binding"/>
    <property type="evidence" value="ECO:0007669"/>
    <property type="project" value="InterPro"/>
</dbReference>
<dbReference type="GO" id="GO:0000400">
    <property type="term" value="F:four-way junction DNA binding"/>
    <property type="evidence" value="ECO:0007669"/>
    <property type="project" value="UniProtKB-UniRule"/>
</dbReference>
<dbReference type="GO" id="GO:0009378">
    <property type="term" value="F:four-way junction helicase activity"/>
    <property type="evidence" value="ECO:0007669"/>
    <property type="project" value="InterPro"/>
</dbReference>
<dbReference type="GO" id="GO:0006310">
    <property type="term" value="P:DNA recombination"/>
    <property type="evidence" value="ECO:0007669"/>
    <property type="project" value="UniProtKB-UniRule"/>
</dbReference>
<dbReference type="GO" id="GO:0006281">
    <property type="term" value="P:DNA repair"/>
    <property type="evidence" value="ECO:0007669"/>
    <property type="project" value="UniProtKB-UniRule"/>
</dbReference>
<dbReference type="CDD" id="cd14332">
    <property type="entry name" value="UBA_RuvA_C"/>
    <property type="match status" value="1"/>
</dbReference>
<dbReference type="Gene3D" id="1.10.150.20">
    <property type="entry name" value="5' to 3' exonuclease, C-terminal subdomain"/>
    <property type="match status" value="1"/>
</dbReference>
<dbReference type="Gene3D" id="1.10.8.10">
    <property type="entry name" value="DNA helicase RuvA subunit, C-terminal domain"/>
    <property type="match status" value="1"/>
</dbReference>
<dbReference type="Gene3D" id="2.40.50.140">
    <property type="entry name" value="Nucleic acid-binding proteins"/>
    <property type="match status" value="1"/>
</dbReference>
<dbReference type="HAMAP" id="MF_00031">
    <property type="entry name" value="DNA_HJ_migration_RuvA"/>
    <property type="match status" value="1"/>
</dbReference>
<dbReference type="InterPro" id="IPR013849">
    <property type="entry name" value="DNA_helicase_Holl-junc_RuvA_I"/>
</dbReference>
<dbReference type="InterPro" id="IPR003583">
    <property type="entry name" value="Hlx-hairpin-Hlx_DNA-bd_motif"/>
</dbReference>
<dbReference type="InterPro" id="IPR012340">
    <property type="entry name" value="NA-bd_OB-fold"/>
</dbReference>
<dbReference type="InterPro" id="IPR000085">
    <property type="entry name" value="RuvA"/>
</dbReference>
<dbReference type="InterPro" id="IPR010994">
    <property type="entry name" value="RuvA_2-like"/>
</dbReference>
<dbReference type="InterPro" id="IPR011114">
    <property type="entry name" value="RuvA_C"/>
</dbReference>
<dbReference type="InterPro" id="IPR036267">
    <property type="entry name" value="RuvA_C_sf"/>
</dbReference>
<dbReference type="NCBIfam" id="TIGR00084">
    <property type="entry name" value="ruvA"/>
    <property type="match status" value="1"/>
</dbReference>
<dbReference type="Pfam" id="PF14520">
    <property type="entry name" value="HHH_5"/>
    <property type="match status" value="1"/>
</dbReference>
<dbReference type="Pfam" id="PF07499">
    <property type="entry name" value="RuvA_C"/>
    <property type="match status" value="1"/>
</dbReference>
<dbReference type="Pfam" id="PF01330">
    <property type="entry name" value="RuvA_N"/>
    <property type="match status" value="1"/>
</dbReference>
<dbReference type="SMART" id="SM00278">
    <property type="entry name" value="HhH1"/>
    <property type="match status" value="2"/>
</dbReference>
<dbReference type="SUPFAM" id="SSF46929">
    <property type="entry name" value="DNA helicase RuvA subunit, C-terminal domain"/>
    <property type="match status" value="1"/>
</dbReference>
<dbReference type="SUPFAM" id="SSF50249">
    <property type="entry name" value="Nucleic acid-binding proteins"/>
    <property type="match status" value="1"/>
</dbReference>
<dbReference type="SUPFAM" id="SSF47781">
    <property type="entry name" value="RuvA domain 2-like"/>
    <property type="match status" value="1"/>
</dbReference>
<keyword id="KW-0963">Cytoplasm</keyword>
<keyword id="KW-0227">DNA damage</keyword>
<keyword id="KW-0233">DNA recombination</keyword>
<keyword id="KW-0234">DNA repair</keyword>
<keyword id="KW-0238">DNA-binding</keyword>
<keyword id="KW-1185">Reference proteome</keyword>
<organism>
    <name type="scientific">Cereibacter sphaeroides (strain ATCC 17023 / DSM 158 / JCM 6121 / CCUG 31486 / LMG 2827 / NBRC 12203 / NCIMB 8253 / ATH 2.4.1.)</name>
    <name type="common">Rhodobacter sphaeroides</name>
    <dbReference type="NCBI Taxonomy" id="272943"/>
    <lineage>
        <taxon>Bacteria</taxon>
        <taxon>Pseudomonadati</taxon>
        <taxon>Pseudomonadota</taxon>
        <taxon>Alphaproteobacteria</taxon>
        <taxon>Rhodobacterales</taxon>
        <taxon>Paracoccaceae</taxon>
        <taxon>Cereibacter</taxon>
    </lineage>
</organism>
<accession>Q3J0F6</accession>